<organism>
    <name type="scientific">Nitrosococcus oceani (strain ATCC 19707 / BCRC 17464 / JCM 30415 / NCIMB 11848 / C-107)</name>
    <dbReference type="NCBI Taxonomy" id="323261"/>
    <lineage>
        <taxon>Bacteria</taxon>
        <taxon>Pseudomonadati</taxon>
        <taxon>Pseudomonadota</taxon>
        <taxon>Gammaproteobacteria</taxon>
        <taxon>Chromatiales</taxon>
        <taxon>Chromatiaceae</taxon>
        <taxon>Nitrosococcus</taxon>
    </lineage>
</organism>
<comment type="function">
    <text evidence="1">Catalyzes the prenylation of para-hydroxybenzoate (PHB) with an all-trans polyprenyl group. Mediates the second step in the final reaction sequence of ubiquinone-8 (UQ-8) biosynthesis, which is the condensation of the polyisoprenoid side chain with PHB, generating the first membrane-bound Q intermediate 3-octaprenyl-4-hydroxybenzoate.</text>
</comment>
<comment type="catalytic activity">
    <reaction evidence="1">
        <text>all-trans-octaprenyl diphosphate + 4-hydroxybenzoate = 4-hydroxy-3-(all-trans-octaprenyl)benzoate + diphosphate</text>
        <dbReference type="Rhea" id="RHEA:27782"/>
        <dbReference type="ChEBI" id="CHEBI:1617"/>
        <dbReference type="ChEBI" id="CHEBI:17879"/>
        <dbReference type="ChEBI" id="CHEBI:33019"/>
        <dbReference type="ChEBI" id="CHEBI:57711"/>
        <dbReference type="EC" id="2.5.1.39"/>
    </reaction>
</comment>
<comment type="cofactor">
    <cofactor evidence="1">
        <name>Mg(2+)</name>
        <dbReference type="ChEBI" id="CHEBI:18420"/>
    </cofactor>
</comment>
<comment type="pathway">
    <text evidence="1">Cofactor biosynthesis; ubiquinone biosynthesis.</text>
</comment>
<comment type="subcellular location">
    <subcellularLocation>
        <location evidence="1">Cell inner membrane</location>
        <topology evidence="1">Multi-pass membrane protein</topology>
    </subcellularLocation>
</comment>
<comment type="similarity">
    <text evidence="1">Belongs to the UbiA prenyltransferase family.</text>
</comment>
<proteinExistence type="inferred from homology"/>
<sequence>MKQRLIIYAQLMRLDRPVGIFLLLWPTLWALWIAGAGQPDPKVLLVFVAGVALMRSAGCVINDFADRAFDPHVKRTINRPLATGKASSQEALLLFAGLCLVAFGLVLLLNPLTIGLSFAGALLAATYPFMKRYTHWPQAYLGAAFGWAVPMAFAAQTGTVPIAAWLLFIATVLWATVYDTFYGMVDREDDLLIGVKSTAILFGEGDRLVTALLQGALLLLLFWIGYREGLGFYYYLGLAIAAGFAGYQQYLLRSREPAQYFRAFLNNNAFGAVIFGGIALHYLTA</sequence>
<feature type="chain" id="PRO_0000262811" description="4-hydroxybenzoate octaprenyltransferase">
    <location>
        <begin position="1"/>
        <end position="285"/>
    </location>
</feature>
<feature type="transmembrane region" description="Helical" evidence="1">
    <location>
        <begin position="17"/>
        <end position="37"/>
    </location>
</feature>
<feature type="transmembrane region" description="Helical" evidence="1">
    <location>
        <begin position="41"/>
        <end position="61"/>
    </location>
</feature>
<feature type="transmembrane region" description="Helical" evidence="1">
    <location>
        <begin position="92"/>
        <end position="112"/>
    </location>
</feature>
<feature type="transmembrane region" description="Helical" evidence="1">
    <location>
        <begin position="135"/>
        <end position="155"/>
    </location>
</feature>
<feature type="transmembrane region" description="Helical" evidence="1">
    <location>
        <begin position="158"/>
        <end position="178"/>
    </location>
</feature>
<feature type="transmembrane region" description="Helical" evidence="1">
    <location>
        <begin position="216"/>
        <end position="236"/>
    </location>
</feature>
<feature type="transmembrane region" description="Helical" evidence="1">
    <location>
        <begin position="263"/>
        <end position="283"/>
    </location>
</feature>
<name>UBIA_NITOC</name>
<gene>
    <name evidence="1" type="primary">ubiA</name>
    <name type="ordered locus">Noc_1217</name>
</gene>
<dbReference type="EC" id="2.5.1.39" evidence="1"/>
<dbReference type="EMBL" id="CP000127">
    <property type="protein sequence ID" value="ABA57718.1"/>
    <property type="molecule type" value="Genomic_DNA"/>
</dbReference>
<dbReference type="RefSeq" id="WP_002809948.1">
    <property type="nucleotide sequence ID" value="NC_007484.1"/>
</dbReference>
<dbReference type="SMR" id="Q3JBS8"/>
<dbReference type="FunCoup" id="Q3JBS8">
    <property type="interactions" value="403"/>
</dbReference>
<dbReference type="STRING" id="323261.Noc_1217"/>
<dbReference type="KEGG" id="noc:Noc_1217"/>
<dbReference type="eggNOG" id="COG0382">
    <property type="taxonomic scope" value="Bacteria"/>
</dbReference>
<dbReference type="HOGENOM" id="CLU_034879_1_0_6"/>
<dbReference type="InParanoid" id="Q3JBS8"/>
<dbReference type="UniPathway" id="UPA00232"/>
<dbReference type="Proteomes" id="UP000006838">
    <property type="component" value="Chromosome"/>
</dbReference>
<dbReference type="GO" id="GO:0005886">
    <property type="term" value="C:plasma membrane"/>
    <property type="evidence" value="ECO:0007669"/>
    <property type="project" value="UniProtKB-SubCell"/>
</dbReference>
<dbReference type="GO" id="GO:0008412">
    <property type="term" value="F:4-hydroxybenzoate polyprenyltransferase activity"/>
    <property type="evidence" value="ECO:0007669"/>
    <property type="project" value="UniProtKB-UniRule"/>
</dbReference>
<dbReference type="GO" id="GO:0006744">
    <property type="term" value="P:ubiquinone biosynthetic process"/>
    <property type="evidence" value="ECO:0007669"/>
    <property type="project" value="UniProtKB-UniRule"/>
</dbReference>
<dbReference type="CDD" id="cd13959">
    <property type="entry name" value="PT_UbiA_COQ2"/>
    <property type="match status" value="1"/>
</dbReference>
<dbReference type="FunFam" id="1.10.357.140:FF:000002">
    <property type="entry name" value="4-hydroxybenzoate octaprenyltransferase"/>
    <property type="match status" value="1"/>
</dbReference>
<dbReference type="FunFam" id="1.20.120.1780:FF:000001">
    <property type="entry name" value="4-hydroxybenzoate octaprenyltransferase"/>
    <property type="match status" value="1"/>
</dbReference>
<dbReference type="Gene3D" id="1.10.357.140">
    <property type="entry name" value="UbiA prenyltransferase"/>
    <property type="match status" value="1"/>
</dbReference>
<dbReference type="Gene3D" id="1.20.120.1780">
    <property type="entry name" value="UbiA prenyltransferase"/>
    <property type="match status" value="1"/>
</dbReference>
<dbReference type="HAMAP" id="MF_01635">
    <property type="entry name" value="UbiA"/>
    <property type="match status" value="1"/>
</dbReference>
<dbReference type="InterPro" id="IPR006370">
    <property type="entry name" value="HB_polyprenyltransferase-like"/>
</dbReference>
<dbReference type="InterPro" id="IPR039653">
    <property type="entry name" value="Prenyltransferase"/>
</dbReference>
<dbReference type="InterPro" id="IPR000537">
    <property type="entry name" value="UbiA_prenyltransferase"/>
</dbReference>
<dbReference type="InterPro" id="IPR030470">
    <property type="entry name" value="UbiA_prenylTrfase_CS"/>
</dbReference>
<dbReference type="InterPro" id="IPR044878">
    <property type="entry name" value="UbiA_sf"/>
</dbReference>
<dbReference type="NCBIfam" id="TIGR01474">
    <property type="entry name" value="ubiA_proteo"/>
    <property type="match status" value="1"/>
</dbReference>
<dbReference type="PANTHER" id="PTHR11048:SF28">
    <property type="entry name" value="4-HYDROXYBENZOATE POLYPRENYLTRANSFERASE, MITOCHONDRIAL"/>
    <property type="match status" value="1"/>
</dbReference>
<dbReference type="PANTHER" id="PTHR11048">
    <property type="entry name" value="PRENYLTRANSFERASES"/>
    <property type="match status" value="1"/>
</dbReference>
<dbReference type="Pfam" id="PF01040">
    <property type="entry name" value="UbiA"/>
    <property type="match status" value="1"/>
</dbReference>
<dbReference type="PROSITE" id="PS00943">
    <property type="entry name" value="UBIA"/>
    <property type="match status" value="1"/>
</dbReference>
<reference key="1">
    <citation type="journal article" date="2006" name="Appl. Environ. Microbiol.">
        <title>Complete genome sequence of the marine, chemolithoautotrophic, ammonia-oxidizing bacterium Nitrosococcus oceani ATCC 19707.</title>
        <authorList>
            <person name="Klotz M.G."/>
            <person name="Arp D.J."/>
            <person name="Chain P.S.G."/>
            <person name="El-Sheikh A.F."/>
            <person name="Hauser L.J."/>
            <person name="Hommes N.G."/>
            <person name="Larimer F.W."/>
            <person name="Malfatti S.A."/>
            <person name="Norton J.M."/>
            <person name="Poret-Peterson A.T."/>
            <person name="Vergez L.M."/>
            <person name="Ward B.B."/>
        </authorList>
    </citation>
    <scope>NUCLEOTIDE SEQUENCE [LARGE SCALE GENOMIC DNA]</scope>
    <source>
        <strain>ATCC 19707 / BCRC 17464 / JCM 30415 / NCIMB 11848 / C-107</strain>
    </source>
</reference>
<evidence type="ECO:0000255" key="1">
    <source>
        <dbReference type="HAMAP-Rule" id="MF_01635"/>
    </source>
</evidence>
<accession>Q3JBS8</accession>
<keyword id="KW-0997">Cell inner membrane</keyword>
<keyword id="KW-1003">Cell membrane</keyword>
<keyword id="KW-0460">Magnesium</keyword>
<keyword id="KW-0472">Membrane</keyword>
<keyword id="KW-1185">Reference proteome</keyword>
<keyword id="KW-0808">Transferase</keyword>
<keyword id="KW-0812">Transmembrane</keyword>
<keyword id="KW-1133">Transmembrane helix</keyword>
<keyword id="KW-0831">Ubiquinone biosynthesis</keyword>
<protein>
    <recommendedName>
        <fullName evidence="1">4-hydroxybenzoate octaprenyltransferase</fullName>
        <ecNumber evidence="1">2.5.1.39</ecNumber>
    </recommendedName>
    <alternativeName>
        <fullName evidence="1">4-HB polyprenyltransferase</fullName>
    </alternativeName>
</protein>